<organism>
    <name type="scientific">Rhodospirillum rubrum (strain ATCC 11170 / ATH 1.1.1 / DSM 467 / LMG 4362 / NCIMB 8255 / S1)</name>
    <dbReference type="NCBI Taxonomy" id="269796"/>
    <lineage>
        <taxon>Bacteria</taxon>
        <taxon>Pseudomonadati</taxon>
        <taxon>Pseudomonadota</taxon>
        <taxon>Alphaproteobacteria</taxon>
        <taxon>Rhodospirillales</taxon>
        <taxon>Rhodospirillaceae</taxon>
        <taxon>Rhodospirillum</taxon>
    </lineage>
</organism>
<accession>Q2RSU5</accession>
<evidence type="ECO:0000255" key="1"/>
<evidence type="ECO:0000269" key="2">
    <source>
    </source>
</evidence>
<evidence type="ECO:0000269" key="3">
    <source>
    </source>
</evidence>
<evidence type="ECO:0000269" key="4">
    <source>
    </source>
</evidence>
<evidence type="ECO:0000269" key="5">
    <source ref="5"/>
</evidence>
<evidence type="ECO:0000303" key="6">
    <source>
    </source>
</evidence>
<evidence type="ECO:0000303" key="7">
    <source>
    </source>
</evidence>
<evidence type="ECO:0000305" key="8"/>
<evidence type="ECO:0000305" key="9">
    <source>
    </source>
</evidence>
<evidence type="ECO:0000305" key="10">
    <source>
    </source>
</evidence>
<evidence type="ECO:0000305" key="11">
    <source>
    </source>
</evidence>
<evidence type="ECO:0000312" key="12">
    <source>
        <dbReference type="EMBL" id="ABC22800.1"/>
    </source>
</evidence>
<evidence type="ECO:0007744" key="13">
    <source>
        <dbReference type="PDB" id="3JZV"/>
    </source>
</evidence>
<evidence type="ECO:0007829" key="14">
    <source>
        <dbReference type="PDB" id="3JZV"/>
    </source>
</evidence>
<proteinExistence type="evidence at protein level"/>
<reference key="1">
    <citation type="journal article" date="2011" name="Stand. Genomic Sci.">
        <title>Complete genome sequence of Rhodospirillum rubrum type strain (S1).</title>
        <authorList>
            <person name="Munk A.C."/>
            <person name="Copeland A."/>
            <person name="Lucas S."/>
            <person name="Lapidus A."/>
            <person name="Del Rio T.G."/>
            <person name="Barry K."/>
            <person name="Detter J.C."/>
            <person name="Hammon N."/>
            <person name="Israni S."/>
            <person name="Pitluck S."/>
            <person name="Brettin T."/>
            <person name="Bruce D."/>
            <person name="Han C."/>
            <person name="Tapia R."/>
            <person name="Gilna P."/>
            <person name="Schmutz J."/>
            <person name="Larimer F."/>
            <person name="Land M."/>
            <person name="Kyrpides N.C."/>
            <person name="Mavromatis K."/>
            <person name="Richardson P."/>
            <person name="Rohde M."/>
            <person name="Goeker M."/>
            <person name="Klenk H.P."/>
            <person name="Zhang Y."/>
            <person name="Roberts G.P."/>
            <person name="Reslewic S."/>
            <person name="Schwartz D.C."/>
        </authorList>
    </citation>
    <scope>NUCLEOTIDE SEQUENCE [LARGE SCALE GENOMIC DNA]</scope>
    <source>
        <strain>ATCC 11170 / ATH 1.1.1 / DSM 467 / LMG 4362 / NCIMB 8255 / S1</strain>
    </source>
</reference>
<reference key="2">
    <citation type="journal article" date="2012" name="Biochemistry">
        <title>1-methylthio-D-xylulose 5-phosphate methylsulfurylase: a novel route to 1-deoxy-D-xylulose 5-phosphate in Rhodospirillum rubrum.</title>
        <authorList>
            <person name="Warlick B.P."/>
            <person name="Evans B.S."/>
            <person name="Erb T.J."/>
            <person name="Ramagopal U.A."/>
            <person name="Sriram J."/>
            <person name="Imker H.J."/>
            <person name="Sauder J.M."/>
            <person name="Bonanno J.B."/>
            <person name="Burley S.K."/>
            <person name="Tabita F.R."/>
            <person name="Almo S.C."/>
            <person name="Sweedler J.S."/>
            <person name="Gerlt J.A."/>
        </authorList>
    </citation>
    <scope>FUNCTION</scope>
    <scope>CATALYTIC ACTIVITY</scope>
    <scope>PATHWAY</scope>
    <scope>MUTAGENESIS OF CYS-121</scope>
    <scope>ACTIVE SITE</scope>
</reference>
<reference key="3">
    <citation type="journal article" date="2012" name="Nat. Chem. Biol.">
        <title>A RubisCO-like protein links SAM metabolism with isoprenoid biosynthesis.</title>
        <authorList>
            <person name="Erb T.J."/>
            <person name="Evans B.S."/>
            <person name="Cho K."/>
            <person name="Warlick B.P."/>
            <person name="Sriram J."/>
            <person name="Wood B.M."/>
            <person name="Imker H.J."/>
            <person name="Sweedler J.V."/>
            <person name="Tabita F.R."/>
            <person name="Gerlt J.A."/>
        </authorList>
    </citation>
    <scope>FUNCTION</scope>
    <scope>CATALYTIC ACTIVITY</scope>
    <scope>PATHWAY</scope>
    <scope>DISRUPTION PHENOTYPE</scope>
    <source>
        <strain>ATCC 11170 / ATH 1.1.1 / DSM 467 / LMG 4362 / NCIMB 8255 / S1</strain>
    </source>
</reference>
<reference key="4">
    <citation type="journal article" date="2017" name="Proc. Natl. Acad. Sci. U.S.A.">
        <title>Microbial pathway for anaerobic 5'-methylthioadenosine metabolism coupled to ethylene formation.</title>
        <authorList>
            <person name="North J.A."/>
            <person name="Miller A.R."/>
            <person name="Wildenthal J.A."/>
            <person name="Young S.J."/>
            <person name="Tabita F.R."/>
        </authorList>
    </citation>
    <scope>PATHWAY</scope>
    <scope>DISRUPTION PHENOTYPE</scope>
</reference>
<reference evidence="13" key="5">
    <citation type="submission" date="2009-09" db="PDB data bank">
        <title>Crystal structure of Rru_A2000 from Rhodospirillum rubrum: A cupin-2 domain.</title>
        <authorList>
            <person name="Ramagopal U.A."/>
            <person name="Toro R."/>
            <person name="Burley S.K."/>
            <person name="Almo S.C."/>
        </authorList>
    </citation>
    <scope>X-RAY CRYSTALLOGRAPHY (2.30 ANGSTROMS) OF 2-156 IN COMPLEX WITH MANGANESE</scope>
</reference>
<name>CUPIN_RHORT</name>
<feature type="chain" id="PRO_0000445436" description="1-methylthio-D-xylulose 5-phosphate methylsulfurylase">
    <location>
        <begin position="1"/>
        <end position="156"/>
    </location>
</feature>
<feature type="domain" description="Cupin type-2" evidence="1">
    <location>
        <begin position="55"/>
        <end position="122"/>
    </location>
</feature>
<feature type="active site" evidence="9">
    <location>
        <position position="121"/>
    </location>
</feature>
<feature type="binding site" evidence="5 13">
    <location>
        <position position="67"/>
    </location>
    <ligand>
        <name>Mn(2+)</name>
        <dbReference type="ChEBI" id="CHEBI:29035"/>
    </ligand>
</feature>
<feature type="binding site" evidence="5 13">
    <location>
        <position position="69"/>
    </location>
    <ligand>
        <name>Mn(2+)</name>
        <dbReference type="ChEBI" id="CHEBI:29035"/>
    </ligand>
</feature>
<feature type="binding site" evidence="5 13">
    <location>
        <position position="73"/>
    </location>
    <ligand>
        <name>Mn(2+)</name>
        <dbReference type="ChEBI" id="CHEBI:29035"/>
    </ligand>
</feature>
<feature type="binding site" evidence="5 13">
    <location>
        <position position="107"/>
    </location>
    <ligand>
        <name>Mn(2+)</name>
        <dbReference type="ChEBI" id="CHEBI:29035"/>
    </ligand>
</feature>
<feature type="mutagenesis site" description="Loss of activity." evidence="2">
    <original>C</original>
    <variation>A</variation>
    <location>
        <position position="121"/>
    </location>
</feature>
<feature type="strand" evidence="14">
    <location>
        <begin position="24"/>
        <end position="26"/>
    </location>
</feature>
<feature type="strand" evidence="14">
    <location>
        <begin position="36"/>
        <end position="44"/>
    </location>
</feature>
<feature type="strand" evidence="14">
    <location>
        <begin position="50"/>
        <end position="63"/>
    </location>
</feature>
<feature type="strand" evidence="14">
    <location>
        <begin position="73"/>
        <end position="80"/>
    </location>
</feature>
<feature type="strand" evidence="14">
    <location>
        <begin position="82"/>
        <end position="86"/>
    </location>
</feature>
<feature type="strand" evidence="14">
    <location>
        <begin position="89"/>
        <end position="93"/>
    </location>
</feature>
<feature type="strand" evidence="14">
    <location>
        <begin position="98"/>
        <end position="101"/>
    </location>
</feature>
<feature type="strand" evidence="14">
    <location>
        <begin position="107"/>
        <end position="110"/>
    </location>
</feature>
<feature type="strand" evidence="14">
    <location>
        <begin position="117"/>
        <end position="126"/>
    </location>
</feature>
<feature type="helix" evidence="14">
    <location>
        <begin position="135"/>
        <end position="142"/>
    </location>
</feature>
<feature type="helix" evidence="14">
    <location>
        <begin position="145"/>
        <end position="151"/>
    </location>
</feature>
<protein>
    <recommendedName>
        <fullName evidence="6">1-methylthio-D-xylulose 5-phosphate methylsulfurylase</fullName>
        <shortName evidence="6">MTXu 5-P methylsulfurylase</shortName>
        <ecNumber evidence="2 3">2.8.4.6</ecNumber>
    </recommendedName>
    <alternativeName>
        <fullName evidence="8">1-methylthio-xylulose 5-phosphate sulfo-lyase</fullName>
    </alternativeName>
</protein>
<dbReference type="EC" id="2.8.4.6" evidence="2 3"/>
<dbReference type="EMBL" id="CP000230">
    <property type="protein sequence ID" value="ABC22800.1"/>
    <property type="molecule type" value="Genomic_DNA"/>
</dbReference>
<dbReference type="RefSeq" id="WP_011389753.1">
    <property type="nucleotide sequence ID" value="NC_007643.1"/>
</dbReference>
<dbReference type="RefSeq" id="YP_427087.1">
    <property type="nucleotide sequence ID" value="NC_007643.1"/>
</dbReference>
<dbReference type="PDB" id="3JZV">
    <property type="method" value="X-ray"/>
    <property type="resolution" value="2.30 A"/>
    <property type="chains" value="A=2-156"/>
</dbReference>
<dbReference type="PDBsum" id="3JZV"/>
<dbReference type="SMR" id="Q2RSU5"/>
<dbReference type="STRING" id="269796.Rru_A2000"/>
<dbReference type="DNASU" id="3835425"/>
<dbReference type="EnsemblBacteria" id="ABC22800">
    <property type="protein sequence ID" value="ABC22800"/>
    <property type="gene ID" value="Rru_A2000"/>
</dbReference>
<dbReference type="KEGG" id="rru:Rru_A2000"/>
<dbReference type="PATRIC" id="fig|269796.9.peg.2084"/>
<dbReference type="eggNOG" id="COG0662">
    <property type="taxonomic scope" value="Bacteria"/>
</dbReference>
<dbReference type="HOGENOM" id="CLU_116722_1_0_5"/>
<dbReference type="PhylomeDB" id="Q2RSU5"/>
<dbReference type="BioCyc" id="MetaCyc:MONOMER-17872"/>
<dbReference type="UniPathway" id="UPA00064"/>
<dbReference type="UniPathway" id="UPA00904"/>
<dbReference type="EvolutionaryTrace" id="Q2RSU5"/>
<dbReference type="Proteomes" id="UP000001929">
    <property type="component" value="Chromosome"/>
</dbReference>
<dbReference type="GO" id="GO:0016829">
    <property type="term" value="F:lyase activity"/>
    <property type="evidence" value="ECO:0007669"/>
    <property type="project" value="UniProtKB-KW"/>
</dbReference>
<dbReference type="GO" id="GO:0046872">
    <property type="term" value="F:metal ion binding"/>
    <property type="evidence" value="ECO:0007669"/>
    <property type="project" value="UniProtKB-KW"/>
</dbReference>
<dbReference type="GO" id="GO:0016740">
    <property type="term" value="F:transferase activity"/>
    <property type="evidence" value="ECO:0007669"/>
    <property type="project" value="UniProtKB-KW"/>
</dbReference>
<dbReference type="GO" id="GO:0052865">
    <property type="term" value="P:1-deoxy-D-xylulose 5-phosphate biosynthetic process"/>
    <property type="evidence" value="ECO:0007669"/>
    <property type="project" value="UniProtKB-UniPathway"/>
</dbReference>
<dbReference type="GO" id="GO:0019509">
    <property type="term" value="P:L-methionine salvage from methylthioadenosine"/>
    <property type="evidence" value="ECO:0007669"/>
    <property type="project" value="UniProtKB-UniPathway"/>
</dbReference>
<dbReference type="CDD" id="cd02222">
    <property type="entry name" value="cupin_TM1459-like"/>
    <property type="match status" value="1"/>
</dbReference>
<dbReference type="Gene3D" id="2.60.120.10">
    <property type="entry name" value="Jelly Rolls"/>
    <property type="match status" value="1"/>
</dbReference>
<dbReference type="InterPro" id="IPR013096">
    <property type="entry name" value="Cupin_2"/>
</dbReference>
<dbReference type="InterPro" id="IPR014710">
    <property type="entry name" value="RmlC-like_jellyroll"/>
</dbReference>
<dbReference type="InterPro" id="IPR011051">
    <property type="entry name" value="RmlC_Cupin_sf"/>
</dbReference>
<dbReference type="Pfam" id="PF07883">
    <property type="entry name" value="Cupin_2"/>
    <property type="match status" value="1"/>
</dbReference>
<dbReference type="SUPFAM" id="SSF51182">
    <property type="entry name" value="RmlC-like cupins"/>
    <property type="match status" value="1"/>
</dbReference>
<sequence length="156" mass="17124">MSDSNDDRPFRPFQSQYRWPGVDLLAYKEEGSAPFRSVTRQVLFSGNGLTGELRYFEVGPGGHSTLERHQHAHGVMILKGRGHAMVGRAVSAVAPYDLVTIPGWSWHQFRAPADEALGFLCMVNAERDKPQLPTEADLAMLRADDAVAAFLDGLAG</sequence>
<comment type="function">
    <text evidence="2 3">Catalyzes the formation of S-(methylsulfanyl)glutathione and 1-deoxy-D-xylulose 5-phosphate (DXP) from 1-methylthioxylulose 5-phosphate (MTXu-5P) (PubMed:23035785, PubMed:23042035). The S-(methylsulfanyl)glutathione is reductively cleaved to relase methanethiol in a second reaction. Involved in the MTA-isoprenoid shunt of the methionine salvage pathway (PubMed:23042035).</text>
</comment>
<comment type="catalytic activity">
    <reaction evidence="2 3">
        <text>S-methyl-1-thio-D-xylulose 5-phosphate + glutathione = S-(methylsulfanyl)glutathione + 1-deoxy-D-xylulose 5-phosphate</text>
        <dbReference type="Rhea" id="RHEA:57080"/>
        <dbReference type="ChEBI" id="CHEBI:57792"/>
        <dbReference type="ChEBI" id="CHEBI:57925"/>
        <dbReference type="ChEBI" id="CHEBI:141466"/>
        <dbReference type="ChEBI" id="CHEBI:141468"/>
        <dbReference type="EC" id="2.8.4.6"/>
    </reaction>
    <physiologicalReaction direction="left-to-right" evidence="2 3">
        <dbReference type="Rhea" id="RHEA:57081"/>
    </physiologicalReaction>
</comment>
<comment type="catalytic activity">
    <reaction evidence="2 3">
        <text>S-(methylsulfanyl)glutathione + AH2 = methanethiol + glutathione + A</text>
        <dbReference type="Rhea" id="RHEA:57092"/>
        <dbReference type="ChEBI" id="CHEBI:13193"/>
        <dbReference type="ChEBI" id="CHEBI:16007"/>
        <dbReference type="ChEBI" id="CHEBI:17499"/>
        <dbReference type="ChEBI" id="CHEBI:57925"/>
        <dbReference type="ChEBI" id="CHEBI:141468"/>
    </reaction>
    <physiologicalReaction direction="left-to-right" evidence="2 3">
        <dbReference type="Rhea" id="RHEA:57093"/>
    </physiologicalReaction>
</comment>
<comment type="pathway">
    <text evidence="11">Amino-acid biosynthesis; L-methionine biosynthesis via salvage pathway.</text>
</comment>
<comment type="pathway">
    <text evidence="9 10">Metabolic intermediate biosynthesis; 1-deoxy-D-xylulose 5-phosphate biosynthesis.</text>
</comment>
<comment type="disruption phenotype">
    <text evidence="3 4">Mutant does not release methanethiol and does not show an increase in 1-deoxy-D-xylulose 5-phosphate formation after 5'-methylthioadenosine (MTA) feeding. Mutant accumulates a mixture of 1-methylthioxylulose 5-phosphate (MTXu-5P) and 1-methylthioribulose 5-phosphate (MTRu-5P) (PubMed:23042035). Inactivation of the gene increases ethylene production from MTA-grown cells (PubMed:29133429).</text>
</comment>
<keyword id="KW-0002">3D-structure</keyword>
<keyword id="KW-0028">Amino-acid biosynthesis</keyword>
<keyword id="KW-0456">Lyase</keyword>
<keyword id="KW-0464">Manganese</keyword>
<keyword id="KW-0479">Metal-binding</keyword>
<keyword id="KW-0486">Methionine biosynthesis</keyword>
<keyword id="KW-1185">Reference proteome</keyword>
<keyword id="KW-0808">Transferase</keyword>
<gene>
    <name evidence="7" type="primary">cupin</name>
    <name evidence="12" type="ordered locus">Rru_A2000</name>
</gene>